<organism>
    <name type="scientific">Ruthia magnifica subsp. Calyptogena magnifica</name>
    <dbReference type="NCBI Taxonomy" id="413404"/>
    <lineage>
        <taxon>Bacteria</taxon>
        <taxon>Pseudomonadati</taxon>
        <taxon>Pseudomonadota</taxon>
        <taxon>Gammaproteobacteria</taxon>
        <taxon>Candidatus Pseudothioglobaceae</taxon>
        <taxon>Candidatus Ruthturnera</taxon>
    </lineage>
</organism>
<evidence type="ECO:0000255" key="1">
    <source>
        <dbReference type="HAMAP-Rule" id="MF_00440"/>
    </source>
</evidence>
<accession>A1AWS1</accession>
<reference key="1">
    <citation type="journal article" date="2007" name="Science">
        <title>The Calyptogena magnifica chemoautotrophic symbiont genome.</title>
        <authorList>
            <person name="Newton I.L.G."/>
            <person name="Woyke T."/>
            <person name="Auchtung T.A."/>
            <person name="Dilly G.F."/>
            <person name="Dutton R.J."/>
            <person name="Fisher M.C."/>
            <person name="Fontanez K.M."/>
            <person name="Lau E."/>
            <person name="Stewart F.J."/>
            <person name="Richardson P.M."/>
            <person name="Barry K.W."/>
            <person name="Saunders E."/>
            <person name="Detter J.C."/>
            <person name="Wu D."/>
            <person name="Eisen J.A."/>
            <person name="Cavanaugh C.M."/>
        </authorList>
    </citation>
    <scope>NUCLEOTIDE SEQUENCE [LARGE SCALE GENOMIC DNA]</scope>
</reference>
<comment type="function">
    <text evidence="1">Negatively regulates transcription of bacterial ribonucleotide reductase nrd genes and operons by binding to NrdR-boxes.</text>
</comment>
<comment type="cofactor">
    <cofactor evidence="1">
        <name>Zn(2+)</name>
        <dbReference type="ChEBI" id="CHEBI:29105"/>
    </cofactor>
    <text evidence="1">Binds 1 zinc ion.</text>
</comment>
<comment type="similarity">
    <text evidence="1">Belongs to the NrdR family.</text>
</comment>
<proteinExistence type="inferred from homology"/>
<feature type="chain" id="PRO_1000080815" description="Transcriptional repressor NrdR">
    <location>
        <begin position="1"/>
        <end position="149"/>
    </location>
</feature>
<feature type="domain" description="ATP-cone" evidence="1">
    <location>
        <begin position="49"/>
        <end position="139"/>
    </location>
</feature>
<feature type="zinc finger region" evidence="1">
    <location>
        <begin position="3"/>
        <end position="34"/>
    </location>
</feature>
<name>NRDR_RUTMC</name>
<sequence>MRCPFCQSDDTKVLDTRLIDDGSQVRRRRECVSCGERYSTRETVDLNLPHLIKSDDSREAFSEDKLRSGLLKALEKRPVKTSQIETSIARIELKLMTQADREVSCIKIGEWVMEELKALDKVAYIRFMSVYRQFQDIEAFKKEIDRLMR</sequence>
<keyword id="KW-0067">ATP-binding</keyword>
<keyword id="KW-0238">DNA-binding</keyword>
<keyword id="KW-0479">Metal-binding</keyword>
<keyword id="KW-0547">Nucleotide-binding</keyword>
<keyword id="KW-0678">Repressor</keyword>
<keyword id="KW-0804">Transcription</keyword>
<keyword id="KW-0805">Transcription regulation</keyword>
<keyword id="KW-0862">Zinc</keyword>
<keyword id="KW-0863">Zinc-finger</keyword>
<dbReference type="EMBL" id="CP000488">
    <property type="protein sequence ID" value="ABL02378.1"/>
    <property type="molecule type" value="Genomic_DNA"/>
</dbReference>
<dbReference type="RefSeq" id="WP_011738003.1">
    <property type="nucleotide sequence ID" value="NC_008610.1"/>
</dbReference>
<dbReference type="SMR" id="A1AWS1"/>
<dbReference type="STRING" id="413404.Rmag_0631"/>
<dbReference type="KEGG" id="rma:Rmag_0631"/>
<dbReference type="eggNOG" id="COG1327">
    <property type="taxonomic scope" value="Bacteria"/>
</dbReference>
<dbReference type="HOGENOM" id="CLU_108412_0_0_6"/>
<dbReference type="OrthoDB" id="9807461at2"/>
<dbReference type="Proteomes" id="UP000002587">
    <property type="component" value="Chromosome"/>
</dbReference>
<dbReference type="GO" id="GO:0005524">
    <property type="term" value="F:ATP binding"/>
    <property type="evidence" value="ECO:0007669"/>
    <property type="project" value="UniProtKB-KW"/>
</dbReference>
<dbReference type="GO" id="GO:0003677">
    <property type="term" value="F:DNA binding"/>
    <property type="evidence" value="ECO:0007669"/>
    <property type="project" value="UniProtKB-KW"/>
</dbReference>
<dbReference type="GO" id="GO:0008270">
    <property type="term" value="F:zinc ion binding"/>
    <property type="evidence" value="ECO:0007669"/>
    <property type="project" value="UniProtKB-UniRule"/>
</dbReference>
<dbReference type="GO" id="GO:0045892">
    <property type="term" value="P:negative regulation of DNA-templated transcription"/>
    <property type="evidence" value="ECO:0007669"/>
    <property type="project" value="UniProtKB-UniRule"/>
</dbReference>
<dbReference type="HAMAP" id="MF_00440">
    <property type="entry name" value="NrdR"/>
    <property type="match status" value="1"/>
</dbReference>
<dbReference type="InterPro" id="IPR005144">
    <property type="entry name" value="ATP-cone_dom"/>
</dbReference>
<dbReference type="InterPro" id="IPR055173">
    <property type="entry name" value="NrdR-like_N"/>
</dbReference>
<dbReference type="InterPro" id="IPR003796">
    <property type="entry name" value="RNR_NrdR-like"/>
</dbReference>
<dbReference type="NCBIfam" id="TIGR00244">
    <property type="entry name" value="transcriptional regulator NrdR"/>
    <property type="match status" value="1"/>
</dbReference>
<dbReference type="PANTHER" id="PTHR30455">
    <property type="entry name" value="TRANSCRIPTIONAL REPRESSOR NRDR"/>
    <property type="match status" value="1"/>
</dbReference>
<dbReference type="PANTHER" id="PTHR30455:SF2">
    <property type="entry name" value="TRANSCRIPTIONAL REPRESSOR NRDR"/>
    <property type="match status" value="1"/>
</dbReference>
<dbReference type="Pfam" id="PF03477">
    <property type="entry name" value="ATP-cone"/>
    <property type="match status" value="1"/>
</dbReference>
<dbReference type="Pfam" id="PF22811">
    <property type="entry name" value="Zn_ribbon_NrdR"/>
    <property type="match status" value="1"/>
</dbReference>
<dbReference type="PROSITE" id="PS51161">
    <property type="entry name" value="ATP_CONE"/>
    <property type="match status" value="1"/>
</dbReference>
<protein>
    <recommendedName>
        <fullName evidence="1">Transcriptional repressor NrdR</fullName>
    </recommendedName>
</protein>
<gene>
    <name evidence="1" type="primary">nrdR</name>
    <name type="ordered locus">Rmag_0631</name>
</gene>